<keyword id="KW-0007">Acetylation</keyword>
<keyword id="KW-0010">Activator</keyword>
<keyword id="KW-0112">Calmodulin-binding</keyword>
<keyword id="KW-0963">Cytoplasm</keyword>
<keyword id="KW-0221">Differentiation</keyword>
<keyword id="KW-0238">DNA-binding</keyword>
<keyword id="KW-0539">Nucleus</keyword>
<keyword id="KW-0678">Repressor</keyword>
<keyword id="KW-0726">Sexual differentiation</keyword>
<keyword id="KW-0804">Transcription</keyword>
<keyword id="KW-0805">Transcription regulation</keyword>
<accession>Q69FB1</accession>
<sequence length="229" mass="26793">MFRVLNDDVYSPAVVQQQNILAFRKDSSSCTDSHSANDQCERGENVRESSQDHIKRPMNAFILWSRERRRKLALENPKMKNSEISKQLGYEWKRLTDAEKRPFFEEAQRLLSIHRDKYPGYKYRPRRKAKRLQKSLPADSSILCNPMHVETLHPFTYRDGCAKTTYSQMESQLSRSQSVIITNSLLQKEHHSSWTSLGHNRVTLATRISEDFPFNKSLEPGLSCAYFQY</sequence>
<dbReference type="EMBL" id="AY341337">
    <property type="protein sequence ID" value="AAR02416.1"/>
    <property type="molecule type" value="Genomic_DNA"/>
</dbReference>
<dbReference type="SMR" id="Q69FB1"/>
<dbReference type="GO" id="GO:0005737">
    <property type="term" value="C:cytoplasm"/>
    <property type="evidence" value="ECO:0007669"/>
    <property type="project" value="UniProtKB-SubCell"/>
</dbReference>
<dbReference type="GO" id="GO:0016607">
    <property type="term" value="C:nuclear speck"/>
    <property type="evidence" value="ECO:0007669"/>
    <property type="project" value="UniProtKB-SubCell"/>
</dbReference>
<dbReference type="GO" id="GO:0005634">
    <property type="term" value="C:nucleus"/>
    <property type="evidence" value="ECO:0000250"/>
    <property type="project" value="UniProtKB"/>
</dbReference>
<dbReference type="GO" id="GO:0005516">
    <property type="term" value="F:calmodulin binding"/>
    <property type="evidence" value="ECO:0007669"/>
    <property type="project" value="UniProtKB-KW"/>
</dbReference>
<dbReference type="GO" id="GO:0001228">
    <property type="term" value="F:DNA-binding transcription activator activity, RNA polymerase II-specific"/>
    <property type="evidence" value="ECO:0007669"/>
    <property type="project" value="TreeGrafter"/>
</dbReference>
<dbReference type="GO" id="GO:0000978">
    <property type="term" value="F:RNA polymerase II cis-regulatory region sequence-specific DNA binding"/>
    <property type="evidence" value="ECO:0007669"/>
    <property type="project" value="TreeGrafter"/>
</dbReference>
<dbReference type="GO" id="GO:0030154">
    <property type="term" value="P:cell differentiation"/>
    <property type="evidence" value="ECO:0007669"/>
    <property type="project" value="UniProtKB-KW"/>
</dbReference>
<dbReference type="GO" id="GO:0030238">
    <property type="term" value="P:male sex determination"/>
    <property type="evidence" value="ECO:0007669"/>
    <property type="project" value="InterPro"/>
</dbReference>
<dbReference type="GO" id="GO:0007548">
    <property type="term" value="P:sex differentiation"/>
    <property type="evidence" value="ECO:0007669"/>
    <property type="project" value="UniProtKB-KW"/>
</dbReference>
<dbReference type="CDD" id="cd22034">
    <property type="entry name" value="HMG-box_SoxA_SRY"/>
    <property type="match status" value="1"/>
</dbReference>
<dbReference type="FunFam" id="1.10.30.10:FF:000002">
    <property type="entry name" value="transcription factor Sox-2"/>
    <property type="match status" value="1"/>
</dbReference>
<dbReference type="Gene3D" id="1.10.30.10">
    <property type="entry name" value="High mobility group box domain"/>
    <property type="match status" value="1"/>
</dbReference>
<dbReference type="InterPro" id="IPR009071">
    <property type="entry name" value="HMG_box_dom"/>
</dbReference>
<dbReference type="InterPro" id="IPR036910">
    <property type="entry name" value="HMG_box_dom_sf"/>
</dbReference>
<dbReference type="InterPro" id="IPR017253">
    <property type="entry name" value="SRY"/>
</dbReference>
<dbReference type="InterPro" id="IPR050140">
    <property type="entry name" value="SRY-related_HMG-box_TF-like"/>
</dbReference>
<dbReference type="PANTHER" id="PTHR10270:SF161">
    <property type="entry name" value="SEX-DETERMINING REGION Y PROTEIN"/>
    <property type="match status" value="1"/>
</dbReference>
<dbReference type="PANTHER" id="PTHR10270">
    <property type="entry name" value="SOX TRANSCRIPTION FACTOR"/>
    <property type="match status" value="1"/>
</dbReference>
<dbReference type="Pfam" id="PF00505">
    <property type="entry name" value="HMG_box"/>
    <property type="match status" value="1"/>
</dbReference>
<dbReference type="PIRSF" id="PIRSF037653">
    <property type="entry name" value="SRY"/>
    <property type="match status" value="1"/>
</dbReference>
<dbReference type="SMART" id="SM00398">
    <property type="entry name" value="HMG"/>
    <property type="match status" value="1"/>
</dbReference>
<dbReference type="SUPFAM" id="SSF47095">
    <property type="entry name" value="HMG-box"/>
    <property type="match status" value="1"/>
</dbReference>
<dbReference type="PROSITE" id="PS50118">
    <property type="entry name" value="HMG_BOX_2"/>
    <property type="match status" value="1"/>
</dbReference>
<proteinExistence type="inferred from homology"/>
<protein>
    <recommendedName>
        <fullName>Sex-determining region Y protein</fullName>
    </recommendedName>
    <alternativeName>
        <fullName>Testis-determining factor</fullName>
    </alternativeName>
</protein>
<feature type="chain" id="PRO_0000048649" description="Sex-determining region Y protein">
    <location>
        <begin position="1"/>
        <end position="229"/>
    </location>
</feature>
<feature type="DNA-binding region" description="HMG box" evidence="3">
    <location>
        <begin position="54"/>
        <end position="122"/>
    </location>
</feature>
<feature type="region of interest" description="Disordered" evidence="4">
    <location>
        <begin position="26"/>
        <end position="51"/>
    </location>
</feature>
<feature type="compositionally biased region" description="Polar residues" evidence="4">
    <location>
        <begin position="28"/>
        <end position="38"/>
    </location>
</feature>
<feature type="compositionally biased region" description="Basic and acidic residues" evidence="4">
    <location>
        <begin position="39"/>
        <end position="51"/>
    </location>
</feature>
<comment type="function">
    <text evidence="1 2">Transcriptional regulator that controls a genetic switch in male development. It is necessary and sufficient for initiating male sex determination by directing the development of supporting cell precursors (pre-Sertoli cells) as Sertoli rather than granulosa cells. Involved in different aspects of gene regulation including promoter activation or repression. Binds to the DNA consensus sequence 5'-[AT]AACAA[AT]-3'. SRY HMG box recognizes DNA by partial intercalation in the minor groove and promotes DNA bending. Also involved in pre-mRNA splicing (By similarity). In male adult brain involved in the maintenance of motor functions of dopaminergic neurons (By similarity).</text>
</comment>
<comment type="subunit">
    <text evidence="2">Interacts with CALM, EP300, HDAC3, KPNB1, ZNF208 isoform KRAB-O, PARP1, SLC9A3R2 and WT1. The interaction with EP300 modulates its DNA-binding activity. The interaction with KPNB1 is sensitive to dissociation by Ran in the GTP-bound form. Interaction with PARP1 impaired its DNA-binding activity.</text>
</comment>
<comment type="subcellular location">
    <subcellularLocation>
        <location evidence="2">Nucleus speckle</location>
    </subcellularLocation>
    <subcellularLocation>
        <location evidence="2">Cytoplasm</location>
    </subcellularLocation>
    <subcellularLocation>
        <location evidence="2">Nucleus</location>
    </subcellularLocation>
</comment>
<comment type="PTM">
    <text evidence="2">Acetylation of Lys-130 contributes to its nuclear localization and enhances its interaction with KPNB1. Deacetylated by HDAC3.</text>
</comment>
<comment type="similarity">
    <text evidence="5">Belongs to the SRY family.</text>
</comment>
<comment type="online information" name="Protein Spotlight">
    <link uri="https://www.proteinspotlight.org/back_issues/080"/>
    <text>The tenuous nature of sex - Issue 80 of March 2007</text>
</comment>
<gene>
    <name type="primary">SRY</name>
    <name type="synonym">TDF</name>
</gene>
<reference key="1">
    <citation type="journal article" date="2004" name="DNA Seq.">
        <title>The complete coding region sequence of river buffalo (Bubalus bubalis) SRY gene.</title>
        <authorList>
            <person name="Parma P."/>
            <person name="Feligini M."/>
            <person name="Greppi G."/>
            <person name="Enne G."/>
        </authorList>
    </citation>
    <scope>NUCLEOTIDE SEQUENCE [GENOMIC DNA]</scope>
</reference>
<organism>
    <name type="scientific">Bubalus bubalis</name>
    <name type="common">Domestic water buffalo</name>
    <dbReference type="NCBI Taxonomy" id="89462"/>
    <lineage>
        <taxon>Eukaryota</taxon>
        <taxon>Metazoa</taxon>
        <taxon>Chordata</taxon>
        <taxon>Craniata</taxon>
        <taxon>Vertebrata</taxon>
        <taxon>Euteleostomi</taxon>
        <taxon>Mammalia</taxon>
        <taxon>Eutheria</taxon>
        <taxon>Laurasiatheria</taxon>
        <taxon>Artiodactyla</taxon>
        <taxon>Ruminantia</taxon>
        <taxon>Pecora</taxon>
        <taxon>Bovidae</taxon>
        <taxon>Bovinae</taxon>
        <taxon>Bubalus</taxon>
    </lineage>
</organism>
<name>SRY_BUBBU</name>
<evidence type="ECO:0000250" key="1">
    <source>
        <dbReference type="UniProtKB" id="P36394"/>
    </source>
</evidence>
<evidence type="ECO:0000250" key="2">
    <source>
        <dbReference type="UniProtKB" id="Q05066"/>
    </source>
</evidence>
<evidence type="ECO:0000255" key="3">
    <source>
        <dbReference type="PROSITE-ProRule" id="PRU00267"/>
    </source>
</evidence>
<evidence type="ECO:0000256" key="4">
    <source>
        <dbReference type="SAM" id="MobiDB-lite"/>
    </source>
</evidence>
<evidence type="ECO:0000305" key="5"/>